<comment type="function">
    <text evidence="6">Transcription factor required for the formation of correct projections from nociceptive sensory neurons to the dorsal horn of the spinal cord and normal perception of pain.</text>
</comment>
<comment type="subunit">
    <text evidence="7">Interacts with RGMB.</text>
</comment>
<comment type="subcellular location">
    <subcellularLocation>
        <location evidence="1 3 4">Nucleus</location>
    </subcellularLocation>
</comment>
<comment type="alternative products">
    <event type="alternative splicing"/>
    <isoform>
        <id>Q8BYH0-1</id>
        <name>1</name>
        <sequence type="displayed"/>
    </isoform>
    <isoform>
        <id>Q8BYH0-2</id>
        <name>2</name>
        <name>Prrxl1-B</name>
        <sequence type="described" ref="VSP_040392"/>
    </isoform>
</comment>
<comment type="tissue specificity">
    <text evidence="6 8">Expressed in the dorsal horn of the spinal cord and dorsal root ganglia. Isoform 1 is higher expressed than isoform 2 both in the dorsal root ganglia and in the spinal cord. Isoform 2 is exclusively localized in neurons primarily involved in the processing of the pain somatosensory modality.</text>
</comment>
<comment type="developmental stage">
    <text evidence="6">First detected at 12.5 dpc in newly generated neurons adjacent to the ventricular zone of the dorsal spinal cord. Later expressed in lateral region of the dorsal spinal cord and dorsal root ganglia at 13.5 dpc with increased levels at 15.5 dpc.</text>
</comment>
<comment type="disruption phenotype">
    <text evidence="6">Defects in the projection pattern of nociceptive sensory neurons to the dorsal horn of the developing spinal cord leading to reduced sensitivity to painful stimuli. They die within 3 weeks of birth. Mice lacking Drgx exhibit reduced expression of Rgmb in dorsal root ganglion sensory neurons.</text>
</comment>
<comment type="similarity">
    <text evidence="2">Belongs to the paired homeobox family.</text>
</comment>
<feature type="chain" id="PRO_0000248487" description="Dorsal root ganglia homeobox protein">
    <location>
        <begin position="1"/>
        <end position="263"/>
    </location>
</feature>
<feature type="DNA-binding region" description="Homeobox" evidence="3">
    <location>
        <begin position="33"/>
        <end position="92"/>
    </location>
</feature>
<feature type="region of interest" description="Disordered" evidence="5">
    <location>
        <begin position="88"/>
        <end position="146"/>
    </location>
</feature>
<feature type="region of interest" description="Disordered" evidence="5">
    <location>
        <begin position="220"/>
        <end position="263"/>
    </location>
</feature>
<feature type="short sequence motif" description="OAR" evidence="4">
    <location>
        <begin position="204"/>
        <end position="217"/>
    </location>
</feature>
<feature type="compositionally biased region" description="Basic and acidic residues" evidence="5">
    <location>
        <begin position="89"/>
        <end position="106"/>
    </location>
</feature>
<feature type="compositionally biased region" description="Pro residues" evidence="5">
    <location>
        <begin position="110"/>
        <end position="123"/>
    </location>
</feature>
<feature type="compositionally biased region" description="Polar residues" evidence="5">
    <location>
        <begin position="220"/>
        <end position="235"/>
    </location>
</feature>
<feature type="compositionally biased region" description="Basic and acidic residues" evidence="5">
    <location>
        <begin position="251"/>
        <end position="263"/>
    </location>
</feature>
<feature type="splice variant" id="VSP_040392" description="In isoform 2." evidence="10 11 12">
    <original>GGPLCSCCVPDPMGLSFLPTYGCQSNRTASVAALRMKAREHSEAVLQSANLLPSTSSSPGPASKQAPPEGSQDKTSPTKEQSEGEKSV</original>
    <variation>DHFRAMLCSGSFGFRGEQTQQRALTPNLYPFLIDERCSAVDMTQG</variation>
    <location>
        <begin position="176"/>
        <end position="263"/>
    </location>
</feature>
<dbReference type="EMBL" id="EU670677">
    <property type="protein sequence ID" value="ACD45984.1"/>
    <property type="molecule type" value="mRNA"/>
</dbReference>
<dbReference type="EMBL" id="EU670678">
    <property type="protein sequence ID" value="ACD45985.1"/>
    <property type="molecule type" value="mRNA"/>
</dbReference>
<dbReference type="EMBL" id="AK039633">
    <property type="protein sequence ID" value="BAC30405.1"/>
    <property type="molecule type" value="mRNA"/>
</dbReference>
<dbReference type="EMBL" id="BC132613">
    <property type="protein sequence ID" value="AAI32614.1"/>
    <property type="molecule type" value="mRNA"/>
</dbReference>
<dbReference type="EMBL" id="BC145917">
    <property type="protein sequence ID" value="AAI45918.1"/>
    <property type="molecule type" value="mRNA"/>
</dbReference>
<dbReference type="EMBL" id="AY116506">
    <property type="protein sequence ID" value="AAM49062.1"/>
    <property type="molecule type" value="mRNA"/>
</dbReference>
<dbReference type="CCDS" id="CCDS26922.1">
    <molecule id="Q8BYH0-2"/>
</dbReference>
<dbReference type="CCDS" id="CCDS84110.1">
    <molecule id="Q8BYH0-1"/>
</dbReference>
<dbReference type="RefSeq" id="NP_001001796.1">
    <molecule id="Q8BYH0-2"/>
    <property type="nucleotide sequence ID" value="NM_001001796.4"/>
</dbReference>
<dbReference type="RefSeq" id="NP_001334519.1">
    <molecule id="Q8BYH0-1"/>
    <property type="nucleotide sequence ID" value="NM_001347590.1"/>
</dbReference>
<dbReference type="RefSeq" id="XP_006518474.1">
    <molecule id="Q8BYH0-1"/>
    <property type="nucleotide sequence ID" value="XM_006518411.3"/>
</dbReference>
<dbReference type="RefSeq" id="XP_006518475.1">
    <molecule id="Q8BYH0-1"/>
    <property type="nucleotide sequence ID" value="XM_006518412.4"/>
</dbReference>
<dbReference type="RefSeq" id="XP_006518476.1">
    <molecule id="Q8BYH0-1"/>
    <property type="nucleotide sequence ID" value="XM_006518413.4"/>
</dbReference>
<dbReference type="RefSeq" id="XP_006518477.1">
    <molecule id="Q8BYH0-1"/>
    <property type="nucleotide sequence ID" value="XM_006518414.3"/>
</dbReference>
<dbReference type="RefSeq" id="XP_011243211.1">
    <property type="nucleotide sequence ID" value="XM_011244909.2"/>
</dbReference>
<dbReference type="SMR" id="Q8BYH0"/>
<dbReference type="BioGRID" id="223539">
    <property type="interactions" value="7"/>
</dbReference>
<dbReference type="FunCoup" id="Q8BYH0">
    <property type="interactions" value="10"/>
</dbReference>
<dbReference type="STRING" id="10090.ENSMUSP00000140337"/>
<dbReference type="GlyGen" id="Q8BYH0">
    <property type="glycosylation" value="1 site"/>
</dbReference>
<dbReference type="iPTMnet" id="Q8BYH0"/>
<dbReference type="PhosphoSitePlus" id="Q8BYH0"/>
<dbReference type="PaxDb" id="10090-ENSMUSP00000064107"/>
<dbReference type="Antibodypedia" id="27592">
    <property type="antibodies" value="159 antibodies from 22 providers"/>
</dbReference>
<dbReference type="DNASU" id="107751"/>
<dbReference type="Ensembl" id="ENSMUST00000068938.7">
    <molecule id="Q8BYH0-2"/>
    <property type="protein sequence ID" value="ENSMUSP00000064107.6"/>
    <property type="gene ID" value="ENSMUSG00000041730.15"/>
</dbReference>
<dbReference type="Ensembl" id="ENSMUST00000186452.7">
    <molecule id="Q8BYH0-1"/>
    <property type="protein sequence ID" value="ENSMUSP00000139756.2"/>
    <property type="gene ID" value="ENSMUSG00000041730.15"/>
</dbReference>
<dbReference type="Ensembl" id="ENSMUST00000187377.7">
    <molecule id="Q8BYH0-2"/>
    <property type="protein sequence ID" value="ENSMUSP00000140687.2"/>
    <property type="gene ID" value="ENSMUSG00000041730.15"/>
</dbReference>
<dbReference type="Ensembl" id="ENSMUST00000189022.8">
    <molecule id="Q8BYH0-1"/>
    <property type="protein sequence ID" value="ENSMUSP00000140337.2"/>
    <property type="gene ID" value="ENSMUSG00000041730.15"/>
</dbReference>
<dbReference type="GeneID" id="107751"/>
<dbReference type="KEGG" id="mmu:107751"/>
<dbReference type="UCSC" id="uc007szf.1">
    <molecule id="Q8BYH0-2"/>
    <property type="organism name" value="mouse"/>
</dbReference>
<dbReference type="UCSC" id="uc011zin.1">
    <molecule id="Q8BYH0-1"/>
    <property type="organism name" value="mouse"/>
</dbReference>
<dbReference type="AGR" id="MGI:2148204"/>
<dbReference type="CTD" id="644168"/>
<dbReference type="MGI" id="MGI:2148204">
    <property type="gene designation" value="Drgx"/>
</dbReference>
<dbReference type="VEuPathDB" id="HostDB:ENSMUSG00000041730"/>
<dbReference type="eggNOG" id="KOG0490">
    <property type="taxonomic scope" value="Eukaryota"/>
</dbReference>
<dbReference type="GeneTree" id="ENSGT00940000159008"/>
<dbReference type="HOGENOM" id="CLU_079091_1_0_1"/>
<dbReference type="InParanoid" id="Q8BYH0"/>
<dbReference type="OMA" id="NHAPTDF"/>
<dbReference type="OrthoDB" id="6159439at2759"/>
<dbReference type="PhylomeDB" id="Q8BYH0"/>
<dbReference type="TreeFam" id="TF351612"/>
<dbReference type="BioGRID-ORCS" id="107751">
    <property type="hits" value="1 hit in 61 CRISPR screens"/>
</dbReference>
<dbReference type="ChiTaRS" id="Prrxl1">
    <property type="organism name" value="mouse"/>
</dbReference>
<dbReference type="PRO" id="PR:Q8BYH0"/>
<dbReference type="Proteomes" id="UP000000589">
    <property type="component" value="Chromosome 14"/>
</dbReference>
<dbReference type="RNAct" id="Q8BYH0">
    <property type="molecule type" value="protein"/>
</dbReference>
<dbReference type="Bgee" id="ENSMUSG00000041730">
    <property type="expression patterns" value="Expressed in trigeminal ganglion and 44 other cell types or tissues"/>
</dbReference>
<dbReference type="ExpressionAtlas" id="Q8BYH0">
    <property type="expression patterns" value="baseline and differential"/>
</dbReference>
<dbReference type="GO" id="GO:0005634">
    <property type="term" value="C:nucleus"/>
    <property type="evidence" value="ECO:0007669"/>
    <property type="project" value="UniProtKB-SubCell"/>
</dbReference>
<dbReference type="GO" id="GO:0003677">
    <property type="term" value="F:DNA binding"/>
    <property type="evidence" value="ECO:0000314"/>
    <property type="project" value="MGI"/>
</dbReference>
<dbReference type="GO" id="GO:0003700">
    <property type="term" value="F:DNA-binding transcription factor activity"/>
    <property type="evidence" value="ECO:0000304"/>
    <property type="project" value="MGI"/>
</dbReference>
<dbReference type="GO" id="GO:0000981">
    <property type="term" value="F:DNA-binding transcription factor activity, RNA polymerase II-specific"/>
    <property type="evidence" value="ECO:0007669"/>
    <property type="project" value="InterPro"/>
</dbReference>
<dbReference type="GO" id="GO:1990837">
    <property type="term" value="F:sequence-specific double-stranded DNA binding"/>
    <property type="evidence" value="ECO:0007669"/>
    <property type="project" value="Ensembl"/>
</dbReference>
<dbReference type="GO" id="GO:0007411">
    <property type="term" value="P:axon guidance"/>
    <property type="evidence" value="ECO:0000315"/>
    <property type="project" value="MGI"/>
</dbReference>
<dbReference type="GO" id="GO:0007409">
    <property type="term" value="P:axonogenesis"/>
    <property type="evidence" value="ECO:0000315"/>
    <property type="project" value="MGI"/>
</dbReference>
<dbReference type="GO" id="GO:0009593">
    <property type="term" value="P:detection of chemical stimulus"/>
    <property type="evidence" value="ECO:0000315"/>
    <property type="project" value="MGI"/>
</dbReference>
<dbReference type="GO" id="GO:0016048">
    <property type="term" value="P:detection of temperature stimulus"/>
    <property type="evidence" value="ECO:0000315"/>
    <property type="project" value="MGI"/>
</dbReference>
<dbReference type="GO" id="GO:0021516">
    <property type="term" value="P:dorsal spinal cord development"/>
    <property type="evidence" value="ECO:0000315"/>
    <property type="project" value="MGI"/>
</dbReference>
<dbReference type="GO" id="GO:0007399">
    <property type="term" value="P:nervous system development"/>
    <property type="evidence" value="ECO:0000315"/>
    <property type="project" value="MGI"/>
</dbReference>
<dbReference type="GO" id="GO:0030182">
    <property type="term" value="P:neuron differentiation"/>
    <property type="evidence" value="ECO:0000315"/>
    <property type="project" value="MGI"/>
</dbReference>
<dbReference type="GO" id="GO:0001764">
    <property type="term" value="P:neuron migration"/>
    <property type="evidence" value="ECO:0000315"/>
    <property type="project" value="MGI"/>
</dbReference>
<dbReference type="GO" id="GO:0050954">
    <property type="term" value="P:sensory perception of mechanical stimulus"/>
    <property type="evidence" value="ECO:0000315"/>
    <property type="project" value="MGI"/>
</dbReference>
<dbReference type="GO" id="GO:0021559">
    <property type="term" value="P:trigeminal nerve development"/>
    <property type="evidence" value="ECO:0000315"/>
    <property type="project" value="MGI"/>
</dbReference>
<dbReference type="CDD" id="cd00086">
    <property type="entry name" value="homeodomain"/>
    <property type="match status" value="1"/>
</dbReference>
<dbReference type="FunFam" id="1.10.10.60:FF:000126">
    <property type="entry name" value="dorsal root ganglia homeobox protein-like"/>
    <property type="match status" value="1"/>
</dbReference>
<dbReference type="Gene3D" id="1.10.10.60">
    <property type="entry name" value="Homeodomain-like"/>
    <property type="match status" value="1"/>
</dbReference>
<dbReference type="InterPro" id="IPR001356">
    <property type="entry name" value="HD"/>
</dbReference>
<dbReference type="InterPro" id="IPR017970">
    <property type="entry name" value="Homeobox_CS"/>
</dbReference>
<dbReference type="InterPro" id="IPR009057">
    <property type="entry name" value="Homeodomain-like_sf"/>
</dbReference>
<dbReference type="InterPro" id="IPR003654">
    <property type="entry name" value="OAR_dom"/>
</dbReference>
<dbReference type="InterPro" id="IPR050649">
    <property type="entry name" value="Paired_Homeobox_TFs"/>
</dbReference>
<dbReference type="PANTHER" id="PTHR24329:SF542">
    <property type="entry name" value="DORSAL ROOT GANGLIA HOMEOBOX PROTEIN"/>
    <property type="match status" value="1"/>
</dbReference>
<dbReference type="PANTHER" id="PTHR24329">
    <property type="entry name" value="HOMEOBOX PROTEIN ARISTALESS"/>
    <property type="match status" value="1"/>
</dbReference>
<dbReference type="Pfam" id="PF00046">
    <property type="entry name" value="Homeodomain"/>
    <property type="match status" value="1"/>
</dbReference>
<dbReference type="Pfam" id="PF03826">
    <property type="entry name" value="OAR"/>
    <property type="match status" value="1"/>
</dbReference>
<dbReference type="SMART" id="SM00389">
    <property type="entry name" value="HOX"/>
    <property type="match status" value="1"/>
</dbReference>
<dbReference type="SUPFAM" id="SSF46689">
    <property type="entry name" value="Homeodomain-like"/>
    <property type="match status" value="1"/>
</dbReference>
<dbReference type="PROSITE" id="PS00027">
    <property type="entry name" value="HOMEOBOX_1"/>
    <property type="match status" value="1"/>
</dbReference>
<dbReference type="PROSITE" id="PS50071">
    <property type="entry name" value="HOMEOBOX_2"/>
    <property type="match status" value="1"/>
</dbReference>
<dbReference type="PROSITE" id="PS50803">
    <property type="entry name" value="OAR"/>
    <property type="match status" value="1"/>
</dbReference>
<name>DRGX_MOUSE</name>
<sequence length="263" mass="28717">MFYFHCPPQLEGTAPFGNHSTGDFDDGFLRRKQRRNRTTFTLQQLEALEAVFAQTHYPDVFTREELAMKINLTEARVQVWFQNRRAKWRKTERGASDQEPGAKEPMAEVTPPPVRNINSPPPGDQTRSKKEALEAQQSLGRTVGPTGPFFPSCLPGTLLNTATYAQALSHVASLKGGPLCSCCVPDPMGLSFLPTYGCQSNRTASVAALRMKAREHSEAVLQSANLLPSTSSSPGPASKQAPPEGSQDKTSPTKEQSEGEKSV</sequence>
<organism>
    <name type="scientific">Mus musculus</name>
    <name type="common">Mouse</name>
    <dbReference type="NCBI Taxonomy" id="10090"/>
    <lineage>
        <taxon>Eukaryota</taxon>
        <taxon>Metazoa</taxon>
        <taxon>Chordata</taxon>
        <taxon>Craniata</taxon>
        <taxon>Vertebrata</taxon>
        <taxon>Euteleostomi</taxon>
        <taxon>Mammalia</taxon>
        <taxon>Eutheria</taxon>
        <taxon>Euarchontoglires</taxon>
        <taxon>Glires</taxon>
        <taxon>Rodentia</taxon>
        <taxon>Myomorpha</taxon>
        <taxon>Muroidea</taxon>
        <taxon>Muridae</taxon>
        <taxon>Murinae</taxon>
        <taxon>Mus</taxon>
        <taxon>Mus</taxon>
    </lineage>
</organism>
<proteinExistence type="evidence at protein level"/>
<accession>Q8BYH0</accession>
<accession>A2RTS1</accession>
<accession>B2ZIF3</accession>
<accession>B2ZIF4</accession>
<accession>Q8K3F8</accession>
<gene>
    <name type="primary">Drgx</name>
    <name evidence="9" type="synonym">Drg11</name>
    <name type="synonym">Prrxl1</name>
</gene>
<reference key="1">
    <citation type="journal article" date="2009" name="Int. J. Dev. Biol.">
        <title>Expression of a Prrxl1 alternative splice variant during the development of the mouse nociceptive system.</title>
        <authorList>
            <person name="Rebelo S."/>
            <person name="Lopes C."/>
            <person name="Lima D."/>
            <person name="Reguenga C."/>
        </authorList>
    </citation>
    <scope>NUCLEOTIDE SEQUENCE [MRNA] (ISOFORMS 1 AND 2)</scope>
    <scope>TISSUE SPECIFICITY</scope>
</reference>
<reference evidence="15" key="2">
    <citation type="journal article" date="2005" name="Science">
        <title>The transcriptional landscape of the mammalian genome.</title>
        <authorList>
            <person name="Carninci P."/>
            <person name="Kasukawa T."/>
            <person name="Katayama S."/>
            <person name="Gough J."/>
            <person name="Frith M.C."/>
            <person name="Maeda N."/>
            <person name="Oyama R."/>
            <person name="Ravasi T."/>
            <person name="Lenhard B."/>
            <person name="Wells C."/>
            <person name="Kodzius R."/>
            <person name="Shimokawa K."/>
            <person name="Bajic V.B."/>
            <person name="Brenner S.E."/>
            <person name="Batalov S."/>
            <person name="Forrest A.R."/>
            <person name="Zavolan M."/>
            <person name="Davis M.J."/>
            <person name="Wilming L.G."/>
            <person name="Aidinis V."/>
            <person name="Allen J.E."/>
            <person name="Ambesi-Impiombato A."/>
            <person name="Apweiler R."/>
            <person name="Aturaliya R.N."/>
            <person name="Bailey T.L."/>
            <person name="Bansal M."/>
            <person name="Baxter L."/>
            <person name="Beisel K.W."/>
            <person name="Bersano T."/>
            <person name="Bono H."/>
            <person name="Chalk A.M."/>
            <person name="Chiu K.P."/>
            <person name="Choudhary V."/>
            <person name="Christoffels A."/>
            <person name="Clutterbuck D.R."/>
            <person name="Crowe M.L."/>
            <person name="Dalla E."/>
            <person name="Dalrymple B.P."/>
            <person name="de Bono B."/>
            <person name="Della Gatta G."/>
            <person name="di Bernardo D."/>
            <person name="Down T."/>
            <person name="Engstrom P."/>
            <person name="Fagiolini M."/>
            <person name="Faulkner G."/>
            <person name="Fletcher C.F."/>
            <person name="Fukushima T."/>
            <person name="Furuno M."/>
            <person name="Futaki S."/>
            <person name="Gariboldi M."/>
            <person name="Georgii-Hemming P."/>
            <person name="Gingeras T.R."/>
            <person name="Gojobori T."/>
            <person name="Green R.E."/>
            <person name="Gustincich S."/>
            <person name="Harbers M."/>
            <person name="Hayashi Y."/>
            <person name="Hensch T.K."/>
            <person name="Hirokawa N."/>
            <person name="Hill D."/>
            <person name="Huminiecki L."/>
            <person name="Iacono M."/>
            <person name="Ikeo K."/>
            <person name="Iwama A."/>
            <person name="Ishikawa T."/>
            <person name="Jakt M."/>
            <person name="Kanapin A."/>
            <person name="Katoh M."/>
            <person name="Kawasawa Y."/>
            <person name="Kelso J."/>
            <person name="Kitamura H."/>
            <person name="Kitano H."/>
            <person name="Kollias G."/>
            <person name="Krishnan S.P."/>
            <person name="Kruger A."/>
            <person name="Kummerfeld S.K."/>
            <person name="Kurochkin I.V."/>
            <person name="Lareau L.F."/>
            <person name="Lazarevic D."/>
            <person name="Lipovich L."/>
            <person name="Liu J."/>
            <person name="Liuni S."/>
            <person name="McWilliam S."/>
            <person name="Madan Babu M."/>
            <person name="Madera M."/>
            <person name="Marchionni L."/>
            <person name="Matsuda H."/>
            <person name="Matsuzawa S."/>
            <person name="Miki H."/>
            <person name="Mignone F."/>
            <person name="Miyake S."/>
            <person name="Morris K."/>
            <person name="Mottagui-Tabar S."/>
            <person name="Mulder N."/>
            <person name="Nakano N."/>
            <person name="Nakauchi H."/>
            <person name="Ng P."/>
            <person name="Nilsson R."/>
            <person name="Nishiguchi S."/>
            <person name="Nishikawa S."/>
            <person name="Nori F."/>
            <person name="Ohara O."/>
            <person name="Okazaki Y."/>
            <person name="Orlando V."/>
            <person name="Pang K.C."/>
            <person name="Pavan W.J."/>
            <person name="Pavesi G."/>
            <person name="Pesole G."/>
            <person name="Petrovsky N."/>
            <person name="Piazza S."/>
            <person name="Reed J."/>
            <person name="Reid J.F."/>
            <person name="Ring B.Z."/>
            <person name="Ringwald M."/>
            <person name="Rost B."/>
            <person name="Ruan Y."/>
            <person name="Salzberg S.L."/>
            <person name="Sandelin A."/>
            <person name="Schneider C."/>
            <person name="Schoenbach C."/>
            <person name="Sekiguchi K."/>
            <person name="Semple C.A."/>
            <person name="Seno S."/>
            <person name="Sessa L."/>
            <person name="Sheng Y."/>
            <person name="Shibata Y."/>
            <person name="Shimada H."/>
            <person name="Shimada K."/>
            <person name="Silva D."/>
            <person name="Sinclair B."/>
            <person name="Sperling S."/>
            <person name="Stupka E."/>
            <person name="Sugiura K."/>
            <person name="Sultana R."/>
            <person name="Takenaka Y."/>
            <person name="Taki K."/>
            <person name="Tammoja K."/>
            <person name="Tan S.L."/>
            <person name="Tang S."/>
            <person name="Taylor M.S."/>
            <person name="Tegner J."/>
            <person name="Teichmann S.A."/>
            <person name="Ueda H.R."/>
            <person name="van Nimwegen E."/>
            <person name="Verardo R."/>
            <person name="Wei C.L."/>
            <person name="Yagi K."/>
            <person name="Yamanishi H."/>
            <person name="Zabarovsky E."/>
            <person name="Zhu S."/>
            <person name="Zimmer A."/>
            <person name="Hide W."/>
            <person name="Bult C."/>
            <person name="Grimmond S.M."/>
            <person name="Teasdale R.D."/>
            <person name="Liu E.T."/>
            <person name="Brusic V."/>
            <person name="Quackenbush J."/>
            <person name="Wahlestedt C."/>
            <person name="Mattick J.S."/>
            <person name="Hume D.A."/>
            <person name="Kai C."/>
            <person name="Sasaki D."/>
            <person name="Tomaru Y."/>
            <person name="Fukuda S."/>
            <person name="Kanamori-Katayama M."/>
            <person name="Suzuki M."/>
            <person name="Aoki J."/>
            <person name="Arakawa T."/>
            <person name="Iida J."/>
            <person name="Imamura K."/>
            <person name="Itoh M."/>
            <person name="Kato T."/>
            <person name="Kawaji H."/>
            <person name="Kawagashira N."/>
            <person name="Kawashima T."/>
            <person name="Kojima M."/>
            <person name="Kondo S."/>
            <person name="Konno H."/>
            <person name="Nakano K."/>
            <person name="Ninomiya N."/>
            <person name="Nishio T."/>
            <person name="Okada M."/>
            <person name="Plessy C."/>
            <person name="Shibata K."/>
            <person name="Shiraki T."/>
            <person name="Suzuki S."/>
            <person name="Tagami M."/>
            <person name="Waki K."/>
            <person name="Watahiki A."/>
            <person name="Okamura-Oho Y."/>
            <person name="Suzuki H."/>
            <person name="Kawai J."/>
            <person name="Hayashizaki Y."/>
        </authorList>
    </citation>
    <scope>NUCLEOTIDE SEQUENCE [LARGE SCALE MRNA] (ISOFORM 2)</scope>
    <source>
        <strain evidence="15">C57BL/6J</strain>
        <tissue evidence="15">Spinal cord</tissue>
    </source>
</reference>
<reference key="3">
    <citation type="journal article" date="2004" name="Genome Res.">
        <title>The status, quality, and expansion of the NIH full-length cDNA project: the Mammalian Gene Collection (MGC).</title>
        <authorList>
            <consortium name="The MGC Project Team"/>
        </authorList>
    </citation>
    <scope>NUCLEOTIDE SEQUENCE [LARGE SCALE MRNA] (ISOFORM 2)</scope>
    <source>
        <tissue>Brain</tissue>
    </source>
</reference>
<reference evidence="13 14" key="4">
    <citation type="journal article" date="2004" name="Neuroscience">
        <title>Developmental regulation of homeobox gene expression in dorsal root ganglion neurons is not recapitulated during regeneration of the crushed sciatic nerve.</title>
        <authorList>
            <person name="Vogelaar C.F."/>
            <person name="Hoekman M.F."/>
            <person name="Brakkee J.H."/>
            <person name="Bogerd J."/>
            <person name="Burbach J.P."/>
        </authorList>
    </citation>
    <scope>NUCLEOTIDE SEQUENCE [MRNA] OF 10-104</scope>
    <source>
        <strain evidence="14">C57BL/6J</strain>
    </source>
</reference>
<reference evidence="13" key="5">
    <citation type="journal article" date="2001" name="Neuron">
        <title>The paired homeodomain protein DRG11 is required for the projection of cutaneous sensory afferent fibers to the dorsal spinal cord.</title>
        <authorList>
            <person name="Chen Z.-F."/>
            <person name="Rebelo S."/>
            <person name="White F."/>
            <person name="Malmberg A.B."/>
            <person name="Baba H."/>
            <person name="Lima D."/>
            <person name="Woolf C.J."/>
            <person name="Basbaum A.I."/>
            <person name="Anderson D.J."/>
        </authorList>
    </citation>
    <scope>FUNCTION</scope>
    <scope>TISSUE SPECIFICITY</scope>
    <scope>DEVELOPMENTAL STAGE</scope>
    <scope>DISRUPTION PHENOTYPE</scope>
</reference>
<reference key="6">
    <citation type="journal article" date="2004" name="J. Neurosci.">
        <title>DRAGON: a member of the repulsive guidance molecule-related family of neuronal- and muscle-expressed membrane proteins is regulated by DRG11 and has neuronal adhesive properties.</title>
        <authorList>
            <person name="Samad T.A."/>
            <person name="Srinivasan A."/>
            <person name="Karchewski L.A."/>
            <person name="Jeong S.-J."/>
            <person name="Campagna J.A."/>
            <person name="Ji R.-R."/>
            <person name="Fabrizio D.A."/>
            <person name="Zhang Y."/>
            <person name="Lin H.Y."/>
            <person name="Bell E."/>
            <person name="Woolf C.J."/>
        </authorList>
    </citation>
    <scope>INTERACTION WITH RGMB AND DISRUPTION PHENOTYPE</scope>
</reference>
<evidence type="ECO:0000250" key="1">
    <source>
        <dbReference type="UniProtKB" id="P54821"/>
    </source>
</evidence>
<evidence type="ECO:0000255" key="2"/>
<evidence type="ECO:0000255" key="3">
    <source>
        <dbReference type="PROSITE-ProRule" id="PRU00108"/>
    </source>
</evidence>
<evidence type="ECO:0000255" key="4">
    <source>
        <dbReference type="PROSITE-ProRule" id="PRU00138"/>
    </source>
</evidence>
<evidence type="ECO:0000256" key="5">
    <source>
        <dbReference type="SAM" id="MobiDB-lite"/>
    </source>
</evidence>
<evidence type="ECO:0000269" key="6">
    <source>
    </source>
</evidence>
<evidence type="ECO:0000269" key="7">
    <source>
    </source>
</evidence>
<evidence type="ECO:0000269" key="8">
    <source>
    </source>
</evidence>
<evidence type="ECO:0000303" key="9">
    <source>
    </source>
</evidence>
<evidence type="ECO:0000303" key="10">
    <source>
    </source>
</evidence>
<evidence type="ECO:0000303" key="11">
    <source>
    </source>
</evidence>
<evidence type="ECO:0000303" key="12">
    <source>
    </source>
</evidence>
<evidence type="ECO:0000305" key="13"/>
<evidence type="ECO:0000312" key="14">
    <source>
        <dbReference type="EMBL" id="AAM49062.1"/>
    </source>
</evidence>
<evidence type="ECO:0000312" key="15">
    <source>
        <dbReference type="EMBL" id="BAC30405.1"/>
    </source>
</evidence>
<keyword id="KW-0025">Alternative splicing</keyword>
<keyword id="KW-0217">Developmental protein</keyword>
<keyword id="KW-0238">DNA-binding</keyword>
<keyword id="KW-0371">Homeobox</keyword>
<keyword id="KW-0539">Nucleus</keyword>
<keyword id="KW-1185">Reference proteome</keyword>
<keyword id="KW-0804">Transcription</keyword>
<keyword id="KW-0805">Transcription regulation</keyword>
<protein>
    <recommendedName>
        <fullName>Dorsal root ganglia homeobox protein</fullName>
    </recommendedName>
    <alternativeName>
        <fullName>Dorsal root ganglion 11</fullName>
    </alternativeName>
    <alternativeName>
        <fullName>Homeobox protein DRG11</fullName>
    </alternativeName>
    <alternativeName>
        <fullName>Paired-related homeobox protein-like 1</fullName>
    </alternativeName>
</protein>